<gene>
    <name evidence="1" type="primary">anmK</name>
    <name type="ordered locus">PSHAb0124</name>
</gene>
<sequence length="401" mass="43557">MHPHISKLYNSALKPSRLIIGLMSGTSLDGLDVALCKITAAGVHTQIEVLKFTTVDYSDDYKTKIKQVFAKRECNLEYLTLLHPWVGKFHGDMVNQCLNSWQVNPANIDVIASHGQTIYHCPKSQHQYNDFNNGTLQIGDSDQIAVTTGITTIGDFRQKHIAAGGEGAPLAVYGDYLFFSSSDENRILLNMGGIANLTFLPQNGDSNAVFSSDIGPCNTIMDAYVQRYFNNMHYDENAAIAKAGFINTALLTALCDNHFLTLKMPKTTGPEVFNLAYLEAAQQASNTQKLSHQDVMATLNRFTAEVIANALNTCVKMAPNSVVYASGGGIHNLLLMQHLVTLCPAIKGFKNTHALGVDPDAKEAVLFAILANECLAGEQLHLDNKAQGIAGVTMGKVSFAD</sequence>
<organism>
    <name type="scientific">Pseudoalteromonas translucida (strain TAC 125)</name>
    <dbReference type="NCBI Taxonomy" id="326442"/>
    <lineage>
        <taxon>Bacteria</taxon>
        <taxon>Pseudomonadati</taxon>
        <taxon>Pseudomonadota</taxon>
        <taxon>Gammaproteobacteria</taxon>
        <taxon>Alteromonadales</taxon>
        <taxon>Pseudoalteromonadaceae</taxon>
        <taxon>Pseudoalteromonas</taxon>
    </lineage>
</organism>
<name>ANMK_PSET1</name>
<accession>Q3ICY1</accession>
<proteinExistence type="inferred from homology"/>
<dbReference type="EC" id="2.7.1.170" evidence="1"/>
<dbReference type="EMBL" id="CR954247">
    <property type="protein sequence ID" value="CAI89173.1"/>
    <property type="molecule type" value="Genomic_DNA"/>
</dbReference>
<dbReference type="SMR" id="Q3ICY1"/>
<dbReference type="STRING" id="326442.PSHAb0124"/>
<dbReference type="KEGG" id="pha:PSHAb0124"/>
<dbReference type="PATRIC" id="fig|326442.8.peg.3039"/>
<dbReference type="eggNOG" id="COG2377">
    <property type="taxonomic scope" value="Bacteria"/>
</dbReference>
<dbReference type="HOGENOM" id="CLU_038782_0_0_6"/>
<dbReference type="BioCyc" id="PHAL326442:PSHA_RS15470-MONOMER"/>
<dbReference type="UniPathway" id="UPA00343"/>
<dbReference type="UniPathway" id="UPA00544"/>
<dbReference type="Proteomes" id="UP000006843">
    <property type="component" value="Chromosome II"/>
</dbReference>
<dbReference type="GO" id="GO:0005524">
    <property type="term" value="F:ATP binding"/>
    <property type="evidence" value="ECO:0007669"/>
    <property type="project" value="UniProtKB-UniRule"/>
</dbReference>
<dbReference type="GO" id="GO:0016301">
    <property type="term" value="F:kinase activity"/>
    <property type="evidence" value="ECO:0007669"/>
    <property type="project" value="UniProtKB-KW"/>
</dbReference>
<dbReference type="GO" id="GO:0016773">
    <property type="term" value="F:phosphotransferase activity, alcohol group as acceptor"/>
    <property type="evidence" value="ECO:0007669"/>
    <property type="project" value="UniProtKB-UniRule"/>
</dbReference>
<dbReference type="GO" id="GO:0097175">
    <property type="term" value="P:1,6-anhydro-N-acetyl-beta-muramic acid catabolic process"/>
    <property type="evidence" value="ECO:0007669"/>
    <property type="project" value="UniProtKB-UniRule"/>
</dbReference>
<dbReference type="GO" id="GO:0006040">
    <property type="term" value="P:amino sugar metabolic process"/>
    <property type="evidence" value="ECO:0007669"/>
    <property type="project" value="InterPro"/>
</dbReference>
<dbReference type="GO" id="GO:0009254">
    <property type="term" value="P:peptidoglycan turnover"/>
    <property type="evidence" value="ECO:0007669"/>
    <property type="project" value="UniProtKB-UniRule"/>
</dbReference>
<dbReference type="Gene3D" id="3.30.420.40">
    <property type="match status" value="2"/>
</dbReference>
<dbReference type="HAMAP" id="MF_01270">
    <property type="entry name" value="AnhMurNAc_kinase"/>
    <property type="match status" value="1"/>
</dbReference>
<dbReference type="InterPro" id="IPR005338">
    <property type="entry name" value="Anhydro_N_Ac-Mur_kinase"/>
</dbReference>
<dbReference type="InterPro" id="IPR043129">
    <property type="entry name" value="ATPase_NBD"/>
</dbReference>
<dbReference type="NCBIfam" id="NF007149">
    <property type="entry name" value="PRK09585.3-4"/>
    <property type="match status" value="1"/>
</dbReference>
<dbReference type="PANTHER" id="PTHR30605">
    <property type="entry name" value="ANHYDRO-N-ACETYLMURAMIC ACID KINASE"/>
    <property type="match status" value="1"/>
</dbReference>
<dbReference type="PANTHER" id="PTHR30605:SF0">
    <property type="entry name" value="ANHYDRO-N-ACETYLMURAMIC ACID KINASE"/>
    <property type="match status" value="1"/>
</dbReference>
<dbReference type="Pfam" id="PF03702">
    <property type="entry name" value="AnmK"/>
    <property type="match status" value="1"/>
</dbReference>
<dbReference type="SUPFAM" id="SSF53067">
    <property type="entry name" value="Actin-like ATPase domain"/>
    <property type="match status" value="1"/>
</dbReference>
<protein>
    <recommendedName>
        <fullName evidence="1">Anhydro-N-acetylmuramic acid kinase</fullName>
        <ecNumber evidence="1">2.7.1.170</ecNumber>
    </recommendedName>
    <alternativeName>
        <fullName evidence="1">AnhMurNAc kinase</fullName>
    </alternativeName>
</protein>
<reference key="1">
    <citation type="journal article" date="2005" name="Genome Res.">
        <title>Coping with cold: the genome of the versatile marine Antarctica bacterium Pseudoalteromonas haloplanktis TAC125.</title>
        <authorList>
            <person name="Medigue C."/>
            <person name="Krin E."/>
            <person name="Pascal G."/>
            <person name="Barbe V."/>
            <person name="Bernsel A."/>
            <person name="Bertin P.N."/>
            <person name="Cheung F."/>
            <person name="Cruveiller S."/>
            <person name="D'Amico S."/>
            <person name="Duilio A."/>
            <person name="Fang G."/>
            <person name="Feller G."/>
            <person name="Ho C."/>
            <person name="Mangenot S."/>
            <person name="Marino G."/>
            <person name="Nilsson J."/>
            <person name="Parrilli E."/>
            <person name="Rocha E.P.C."/>
            <person name="Rouy Z."/>
            <person name="Sekowska A."/>
            <person name="Tutino M.L."/>
            <person name="Vallenet D."/>
            <person name="von Heijne G."/>
            <person name="Danchin A."/>
        </authorList>
    </citation>
    <scope>NUCLEOTIDE SEQUENCE [LARGE SCALE GENOMIC DNA]</scope>
    <source>
        <strain>TAC 125</strain>
    </source>
</reference>
<keyword id="KW-0067">ATP-binding</keyword>
<keyword id="KW-0119">Carbohydrate metabolism</keyword>
<keyword id="KW-0418">Kinase</keyword>
<keyword id="KW-0547">Nucleotide-binding</keyword>
<keyword id="KW-1185">Reference proteome</keyword>
<keyword id="KW-0808">Transferase</keyword>
<evidence type="ECO:0000255" key="1">
    <source>
        <dbReference type="HAMAP-Rule" id="MF_01270"/>
    </source>
</evidence>
<feature type="chain" id="PRO_0000250027" description="Anhydro-N-acetylmuramic acid kinase">
    <location>
        <begin position="1"/>
        <end position="401"/>
    </location>
</feature>
<feature type="binding site" evidence="1">
    <location>
        <begin position="25"/>
        <end position="32"/>
    </location>
    <ligand>
        <name>ATP</name>
        <dbReference type="ChEBI" id="CHEBI:30616"/>
    </ligand>
</feature>
<comment type="function">
    <text evidence="1">Catalyzes the specific phosphorylation of 1,6-anhydro-N-acetylmuramic acid (anhMurNAc) with the simultaneous cleavage of the 1,6-anhydro ring, generating MurNAc-6-P. Is required for the utilization of anhMurNAc either imported from the medium or derived from its own cell wall murein, and thus plays a role in cell wall recycling.</text>
</comment>
<comment type="catalytic activity">
    <reaction evidence="1">
        <text>1,6-anhydro-N-acetyl-beta-muramate + ATP + H2O = N-acetyl-D-muramate 6-phosphate + ADP + H(+)</text>
        <dbReference type="Rhea" id="RHEA:24952"/>
        <dbReference type="ChEBI" id="CHEBI:15377"/>
        <dbReference type="ChEBI" id="CHEBI:15378"/>
        <dbReference type="ChEBI" id="CHEBI:30616"/>
        <dbReference type="ChEBI" id="CHEBI:58690"/>
        <dbReference type="ChEBI" id="CHEBI:58722"/>
        <dbReference type="ChEBI" id="CHEBI:456216"/>
        <dbReference type="EC" id="2.7.1.170"/>
    </reaction>
</comment>
<comment type="pathway">
    <text evidence="1">Amino-sugar metabolism; 1,6-anhydro-N-acetylmuramate degradation.</text>
</comment>
<comment type="pathway">
    <text evidence="1">Cell wall biogenesis; peptidoglycan recycling.</text>
</comment>
<comment type="similarity">
    <text evidence="1">Belongs to the anhydro-N-acetylmuramic acid kinase family.</text>
</comment>